<name>LIPB_RHIEC</name>
<accession>Q2K833</accession>
<reference key="1">
    <citation type="journal article" date="2006" name="Proc. Natl. Acad. Sci. U.S.A.">
        <title>The partitioned Rhizobium etli genome: genetic and metabolic redundancy in seven interacting replicons.</title>
        <authorList>
            <person name="Gonzalez V."/>
            <person name="Santamaria R.I."/>
            <person name="Bustos P."/>
            <person name="Hernandez-Gonzalez I."/>
            <person name="Medrano-Soto A."/>
            <person name="Moreno-Hagelsieb G."/>
            <person name="Janga S.C."/>
            <person name="Ramirez M.A."/>
            <person name="Jimenez-Jacinto V."/>
            <person name="Collado-Vides J."/>
            <person name="Davila G."/>
        </authorList>
    </citation>
    <scope>NUCLEOTIDE SEQUENCE [LARGE SCALE GENOMIC DNA]</scope>
    <source>
        <strain>ATCC 51251 / DSM 11541 / JCM 21823 / NBRC 15573 / CFN 42</strain>
    </source>
</reference>
<sequence length="239" mass="26603">MAMLRTDLEFSMLPKLGTRPVRWRIADGLVAYEAAVEMMEREVAAIGEGGDELVWLVEHPPLYTAGTSANASDLVQPDRFPVFATGRGGEYTYHGPGQRVAYVMLDLKRRRQDVRAFVAALEEVVIRTLDMMNVRGERREDRVGVWVRRPEKPLLPDGTMAEDKIAALGIRLRKWVTFHGLSLNVDPDLDHFSGIVPCGISTYGVTSLVDLGLPVMMADVDIRLRAAFETVFGETTNDA</sequence>
<comment type="function">
    <text evidence="1">Catalyzes the transfer of endogenously produced octanoic acid from octanoyl-acyl-carrier-protein onto the lipoyl domains of lipoate-dependent enzymes. Lipoyl-ACP can also act as a substrate although octanoyl-ACP is likely to be the physiological substrate.</text>
</comment>
<comment type="catalytic activity">
    <reaction evidence="1">
        <text>octanoyl-[ACP] + L-lysyl-[protein] = N(6)-octanoyl-L-lysyl-[protein] + holo-[ACP] + H(+)</text>
        <dbReference type="Rhea" id="RHEA:17665"/>
        <dbReference type="Rhea" id="RHEA-COMP:9636"/>
        <dbReference type="Rhea" id="RHEA-COMP:9685"/>
        <dbReference type="Rhea" id="RHEA-COMP:9752"/>
        <dbReference type="Rhea" id="RHEA-COMP:9928"/>
        <dbReference type="ChEBI" id="CHEBI:15378"/>
        <dbReference type="ChEBI" id="CHEBI:29969"/>
        <dbReference type="ChEBI" id="CHEBI:64479"/>
        <dbReference type="ChEBI" id="CHEBI:78463"/>
        <dbReference type="ChEBI" id="CHEBI:78809"/>
        <dbReference type="EC" id="2.3.1.181"/>
    </reaction>
</comment>
<comment type="pathway">
    <text evidence="1">Protein modification; protein lipoylation via endogenous pathway; protein N(6)-(lipoyl)lysine from octanoyl-[acyl-carrier-protein]: step 1/2.</text>
</comment>
<comment type="subcellular location">
    <subcellularLocation>
        <location evidence="1">Cytoplasm</location>
    </subcellularLocation>
</comment>
<comment type="miscellaneous">
    <text evidence="1">In the reaction, the free carboxyl group of octanoic acid is attached via an amide linkage to the epsilon-amino group of a specific lysine residue of lipoyl domains of lipoate-dependent enzymes.</text>
</comment>
<comment type="similarity">
    <text evidence="1">Belongs to the LipB family.</text>
</comment>
<gene>
    <name evidence="1" type="primary">lipB</name>
    <name type="ordered locus">RHE_CH02223</name>
</gene>
<evidence type="ECO:0000255" key="1">
    <source>
        <dbReference type="HAMAP-Rule" id="MF_00013"/>
    </source>
</evidence>
<evidence type="ECO:0000255" key="2">
    <source>
        <dbReference type="PROSITE-ProRule" id="PRU01067"/>
    </source>
</evidence>
<keyword id="KW-0012">Acyltransferase</keyword>
<keyword id="KW-0963">Cytoplasm</keyword>
<keyword id="KW-1185">Reference proteome</keyword>
<keyword id="KW-0808">Transferase</keyword>
<protein>
    <recommendedName>
        <fullName evidence="1">Octanoyltransferase</fullName>
        <ecNumber evidence="1">2.3.1.181</ecNumber>
    </recommendedName>
    <alternativeName>
        <fullName evidence="1">Lipoate-protein ligase B</fullName>
    </alternativeName>
    <alternativeName>
        <fullName evidence="1">Lipoyl/octanoyl transferase</fullName>
    </alternativeName>
    <alternativeName>
        <fullName evidence="1">Octanoyl-[acyl-carrier-protein]-protein N-octanoyltransferase</fullName>
    </alternativeName>
</protein>
<feature type="chain" id="PRO_0000242753" description="Octanoyltransferase">
    <location>
        <begin position="1"/>
        <end position="239"/>
    </location>
</feature>
<feature type="domain" description="BPL/LPL catalytic" evidence="2">
    <location>
        <begin position="48"/>
        <end position="236"/>
    </location>
</feature>
<feature type="active site" description="Acyl-thioester intermediate" evidence="1">
    <location>
        <position position="198"/>
    </location>
</feature>
<feature type="binding site" evidence="1">
    <location>
        <begin position="87"/>
        <end position="94"/>
    </location>
    <ligand>
        <name>substrate</name>
    </ligand>
</feature>
<feature type="binding site" evidence="1">
    <location>
        <begin position="167"/>
        <end position="169"/>
    </location>
    <ligand>
        <name>substrate</name>
    </ligand>
</feature>
<feature type="binding site" evidence="1">
    <location>
        <begin position="180"/>
        <end position="182"/>
    </location>
    <ligand>
        <name>substrate</name>
    </ligand>
</feature>
<feature type="site" description="Lowers pKa of active site Cys" evidence="1">
    <location>
        <position position="164"/>
    </location>
</feature>
<proteinExistence type="inferred from homology"/>
<organism>
    <name type="scientific">Rhizobium etli (strain ATCC 51251 / DSM 11541 / JCM 21823 / NBRC 15573 / CFN 42)</name>
    <dbReference type="NCBI Taxonomy" id="347834"/>
    <lineage>
        <taxon>Bacteria</taxon>
        <taxon>Pseudomonadati</taxon>
        <taxon>Pseudomonadota</taxon>
        <taxon>Alphaproteobacteria</taxon>
        <taxon>Hyphomicrobiales</taxon>
        <taxon>Rhizobiaceae</taxon>
        <taxon>Rhizobium/Agrobacterium group</taxon>
        <taxon>Rhizobium</taxon>
    </lineage>
</organism>
<dbReference type="EC" id="2.3.1.181" evidence="1"/>
<dbReference type="EMBL" id="CP000133">
    <property type="protein sequence ID" value="ABC91003.1"/>
    <property type="molecule type" value="Genomic_DNA"/>
</dbReference>
<dbReference type="RefSeq" id="WP_011425484.1">
    <property type="nucleotide sequence ID" value="NC_007761.1"/>
</dbReference>
<dbReference type="SMR" id="Q2K833"/>
<dbReference type="KEGG" id="ret:RHE_CH02223"/>
<dbReference type="eggNOG" id="COG0321">
    <property type="taxonomic scope" value="Bacteria"/>
</dbReference>
<dbReference type="HOGENOM" id="CLU_035168_3_0_5"/>
<dbReference type="OrthoDB" id="9787061at2"/>
<dbReference type="UniPathway" id="UPA00538">
    <property type="reaction ID" value="UER00592"/>
</dbReference>
<dbReference type="Proteomes" id="UP000001936">
    <property type="component" value="Chromosome"/>
</dbReference>
<dbReference type="GO" id="GO:0005737">
    <property type="term" value="C:cytoplasm"/>
    <property type="evidence" value="ECO:0007669"/>
    <property type="project" value="UniProtKB-SubCell"/>
</dbReference>
<dbReference type="GO" id="GO:0033819">
    <property type="term" value="F:lipoyl(octanoyl) transferase activity"/>
    <property type="evidence" value="ECO:0007669"/>
    <property type="project" value="UniProtKB-EC"/>
</dbReference>
<dbReference type="GO" id="GO:0036211">
    <property type="term" value="P:protein modification process"/>
    <property type="evidence" value="ECO:0007669"/>
    <property type="project" value="InterPro"/>
</dbReference>
<dbReference type="CDD" id="cd16444">
    <property type="entry name" value="LipB"/>
    <property type="match status" value="1"/>
</dbReference>
<dbReference type="Gene3D" id="3.30.930.10">
    <property type="entry name" value="Bira Bifunctional Protein, Domain 2"/>
    <property type="match status" value="1"/>
</dbReference>
<dbReference type="HAMAP" id="MF_00013">
    <property type="entry name" value="LipB"/>
    <property type="match status" value="1"/>
</dbReference>
<dbReference type="InterPro" id="IPR045864">
    <property type="entry name" value="aa-tRNA-synth_II/BPL/LPL"/>
</dbReference>
<dbReference type="InterPro" id="IPR004143">
    <property type="entry name" value="BPL_LPL_catalytic"/>
</dbReference>
<dbReference type="InterPro" id="IPR000544">
    <property type="entry name" value="Octanoyltransferase"/>
</dbReference>
<dbReference type="InterPro" id="IPR020605">
    <property type="entry name" value="Octanoyltransferase_CS"/>
</dbReference>
<dbReference type="NCBIfam" id="TIGR00214">
    <property type="entry name" value="lipB"/>
    <property type="match status" value="1"/>
</dbReference>
<dbReference type="NCBIfam" id="NF010921">
    <property type="entry name" value="PRK14341.1"/>
    <property type="match status" value="1"/>
</dbReference>
<dbReference type="NCBIfam" id="NF010925">
    <property type="entry name" value="PRK14345.1"/>
    <property type="match status" value="1"/>
</dbReference>
<dbReference type="PANTHER" id="PTHR10993:SF7">
    <property type="entry name" value="LIPOYLTRANSFERASE 2, MITOCHONDRIAL-RELATED"/>
    <property type="match status" value="1"/>
</dbReference>
<dbReference type="PANTHER" id="PTHR10993">
    <property type="entry name" value="OCTANOYLTRANSFERASE"/>
    <property type="match status" value="1"/>
</dbReference>
<dbReference type="Pfam" id="PF21948">
    <property type="entry name" value="LplA-B_cat"/>
    <property type="match status" value="1"/>
</dbReference>
<dbReference type="PIRSF" id="PIRSF016262">
    <property type="entry name" value="LPLase"/>
    <property type="match status" value="1"/>
</dbReference>
<dbReference type="SUPFAM" id="SSF55681">
    <property type="entry name" value="Class II aaRS and biotin synthetases"/>
    <property type="match status" value="1"/>
</dbReference>
<dbReference type="PROSITE" id="PS51733">
    <property type="entry name" value="BPL_LPL_CATALYTIC"/>
    <property type="match status" value="1"/>
</dbReference>
<dbReference type="PROSITE" id="PS01313">
    <property type="entry name" value="LIPB"/>
    <property type="match status" value="1"/>
</dbReference>